<reference key="1">
    <citation type="journal article" date="2007" name="ChemBioChem">
        <title>Biosynthesis of the 2-pyridone tenellin in the insect pathogenic fungus Beauveria bassiana.</title>
        <authorList>
            <person name="Eley K.L."/>
            <person name="Halo L.M."/>
            <person name="Song Z."/>
            <person name="Powles H."/>
            <person name="Cox R.J."/>
            <person name="Bailey A.M."/>
            <person name="Lazarus C.M."/>
            <person name="Simpson T.J."/>
        </authorList>
    </citation>
    <scope>NUCLEOTIDE SEQUENCE [GENOMIC DNA]</scope>
    <scope>FUNCTION</scope>
    <scope>PATHWAY</scope>
    <source>
        <strain>CBS 110.25</strain>
    </source>
</reference>
<reference key="2">
    <citation type="journal article" date="2008" name="ChemBioChem">
        <title>Authentic heterologous expression of the tenellin iterative polyketide synthase nonribosomal peptide synthetase requires coexpression with an enoyl reductase.</title>
        <authorList>
            <person name="Halo L.M."/>
            <person name="Marshall J.W."/>
            <person name="Yakasai A.A."/>
            <person name="Song Z."/>
            <person name="Butts C.P."/>
            <person name="Crump M.P."/>
            <person name="Heneghan M."/>
            <person name="Bailey A.M."/>
            <person name="Simpson T.J."/>
            <person name="Lazarus C.M."/>
            <person name="Cox R.J."/>
        </authorList>
    </citation>
    <scope>FUNCTION</scope>
    <scope>PATHWAY</scope>
</reference>
<reference key="3">
    <citation type="journal article" date="2010" name="ChemBioChem">
        <title>First heterologous reconstruction of a complete functional fungal biosynthetic multigene cluster.</title>
        <authorList>
            <person name="Heneghan M.N."/>
            <person name="Yakasai A.A."/>
            <person name="Halo L.M."/>
            <person name="Song Z."/>
            <person name="Bailey A.M."/>
            <person name="Simpson T.J."/>
            <person name="Cox R.J."/>
            <person name="Lazarus C.M."/>
        </authorList>
    </citation>
    <scope>FUNCTION</scope>
    <scope>PATHWAY</scope>
</reference>
<reference key="4">
    <citation type="journal article" date="2021" name="MBio">
        <title>Inductive production of the iron-chelating 2-pyridones benefits the producing fungus to compete for diverse niches.</title>
        <authorList>
            <person name="Chen B."/>
            <person name="Sun Y."/>
            <person name="Li S."/>
            <person name="Yin Y."/>
            <person name="Wang C."/>
        </authorList>
    </citation>
    <scope>FUNCTION</scope>
    <scope>INDUCTION</scope>
    <scope>PATHWAY</scope>
</reference>
<name>TENC_BEABA</name>
<proteinExistence type="evidence at transcript level"/>
<keyword id="KW-0521">NADP</keyword>
<keyword id="KW-0547">Nucleotide-binding</keyword>
<keyword id="KW-0560">Oxidoreductase</keyword>
<accession>A0JJU0</accession>
<protein>
    <recommendedName>
        <fullName evidence="8">Trans-enoyl reductase tenC</fullName>
        <ecNumber evidence="4">1.-.-.-</ecNumber>
    </recommendedName>
    <alternativeName>
        <fullName evidence="8">Tenellin biosynthesis protein C</fullName>
    </alternativeName>
</protein>
<dbReference type="EC" id="1.-.-.-" evidence="4"/>
<dbReference type="EMBL" id="AM409327">
    <property type="protein sequence ID" value="CAL69596.1"/>
    <property type="molecule type" value="Genomic_DNA"/>
</dbReference>
<dbReference type="SMR" id="A0JJU0"/>
<dbReference type="GO" id="GO:0000166">
    <property type="term" value="F:nucleotide binding"/>
    <property type="evidence" value="ECO:0007669"/>
    <property type="project" value="UniProtKB-KW"/>
</dbReference>
<dbReference type="GO" id="GO:0016651">
    <property type="term" value="F:oxidoreductase activity, acting on NAD(P)H"/>
    <property type="evidence" value="ECO:0007669"/>
    <property type="project" value="InterPro"/>
</dbReference>
<dbReference type="CDD" id="cd08249">
    <property type="entry name" value="enoyl_reductase_like"/>
    <property type="match status" value="1"/>
</dbReference>
<dbReference type="Gene3D" id="3.90.180.10">
    <property type="entry name" value="Medium-chain alcohol dehydrogenases, catalytic domain"/>
    <property type="match status" value="1"/>
</dbReference>
<dbReference type="Gene3D" id="3.40.50.720">
    <property type="entry name" value="NAD(P)-binding Rossmann-like Domain"/>
    <property type="match status" value="1"/>
</dbReference>
<dbReference type="InterPro" id="IPR013149">
    <property type="entry name" value="ADH-like_C"/>
</dbReference>
<dbReference type="InterPro" id="IPR013154">
    <property type="entry name" value="ADH-like_N"/>
</dbReference>
<dbReference type="InterPro" id="IPR011032">
    <property type="entry name" value="GroES-like_sf"/>
</dbReference>
<dbReference type="InterPro" id="IPR036291">
    <property type="entry name" value="NAD(P)-bd_dom_sf"/>
</dbReference>
<dbReference type="InterPro" id="IPR020843">
    <property type="entry name" value="PKS_ER"/>
</dbReference>
<dbReference type="InterPro" id="IPR047122">
    <property type="entry name" value="Trans-enoyl_RdTase-like"/>
</dbReference>
<dbReference type="PANTHER" id="PTHR45348">
    <property type="entry name" value="HYPOTHETICAL OXIDOREDUCTASE (EUROFUNG)"/>
    <property type="match status" value="1"/>
</dbReference>
<dbReference type="PANTHER" id="PTHR45348:SF6">
    <property type="entry name" value="TRANS-ENOYL REDUCTASE APDC"/>
    <property type="match status" value="1"/>
</dbReference>
<dbReference type="Pfam" id="PF08240">
    <property type="entry name" value="ADH_N"/>
    <property type="match status" value="1"/>
</dbReference>
<dbReference type="Pfam" id="PF00107">
    <property type="entry name" value="ADH_zinc_N"/>
    <property type="match status" value="1"/>
</dbReference>
<dbReference type="SMART" id="SM00829">
    <property type="entry name" value="PKS_ER"/>
    <property type="match status" value="1"/>
</dbReference>
<dbReference type="SUPFAM" id="SSF50129">
    <property type="entry name" value="GroES-like"/>
    <property type="match status" value="1"/>
</dbReference>
<dbReference type="SUPFAM" id="SSF51735">
    <property type="entry name" value="NAD(P)-binding Rossmann-fold domains"/>
    <property type="match status" value="1"/>
</dbReference>
<sequence>MAAISSPPLTQKALKVASPDTLHLVTDAPLPTLGQDDSVLIRVVCVAINPVDGKSAEMSPTPGATSGTDFAGIVVALHGDAKSRTETADTIKTGDRVMGFVFGNNPHVLGNGAFAEYVTLPRRFLWRVPDHMSLEAAASLPVGVASVGMALHYLRISMSSLLKAVSRSIAAPSASQPHDGAFDSDANVFILVYGGGTSTGAIAIQILKAAGFHPITCCSSESASRAKRLGAVATFDYQSATCGRDIRDYTNDSLTLAIDCLSESASMAICYEAMGSAGGRYVSLDPFPVRGCVRRSIVPDWICSFTQFGQSIPWAPPYNLDERPDDHRLAEEWYHLAQKLLDAELIEAPTLEIRSGGLLHVPEGVAAVKLGQIKRRKLVYHISEEALP</sequence>
<evidence type="ECO:0000250" key="1">
    <source>
        <dbReference type="UniProtKB" id="Q9Y7D0"/>
    </source>
</evidence>
<evidence type="ECO:0000255" key="2"/>
<evidence type="ECO:0000269" key="3">
    <source>
    </source>
</evidence>
<evidence type="ECO:0000269" key="4">
    <source>
    </source>
</evidence>
<evidence type="ECO:0000269" key="5">
    <source>
    </source>
</evidence>
<evidence type="ECO:0000269" key="6">
    <source>
    </source>
</evidence>
<evidence type="ECO:0000303" key="7">
    <source>
    </source>
</evidence>
<evidence type="ECO:0000303" key="8">
    <source>
    </source>
</evidence>
<evidence type="ECO:0000305" key="9"/>
<comment type="function">
    <text evidence="3 4 5 6">Trans-enoyl reductase; part of the gene cluster that mediates the biosynthesis of tenellin-type 2-pyridones, iron-chelating compounds involved in iron stress tolerance, competition with the natural competitor fungus Metarhizium robertsii and insect hosts infection (PubMed:17216664, PubMed:18266306, PubMed:20575135, PubMed:34903054). TenC collaborates with the hybrid PKS-NRPS synthetase tenS to catalyze the assembly of the polyketide-amino acid backbone, since tenS lacks a designated enoylreductase (ER) domain (PubMed:18266306, PubMed:34903054). Upon formation of the polyketide backbone on the thiotemplate of tenS, the triketide is transferred to the NRPS module and linked to tyrosine to produce the pyrrolidine-2-dione intermediates, including pretellinin A, 11-hydropretellenin A, 12-hydropretellenin A, 13-hydropretellenin A, 14-hydropretellenin A, 12-oxopretellenin A and prototellinin D (PubMed:18266306, PubMed:34903054). The pathway begins with the assembly of the polyketide-amino acid backbone by the hybrid PKS-NRPS tenS with the help of the enoyl reductase tenC. These enzymes catalyze the synthesis of the pyrrolidine-2-dione intermediates pretellinin A, 11-hydropretellenin A, 12-hydropretellenin A, 13-hydropretellenin A, 14-hydropretellenin A, 12-oxopretellenin A and prototellinin D. The cytochrome P450 monooxygenase tenA then catalyzes an oxidative ring expansion of pretenellin A and 14-hydropretellenin A to form the 2-pyridone core, leading to pretenellin B and pyridovericin, respectively. The cytochrome P450 monooxygenase tenB is then required for the selective N-hydroxylation of the 2-pyridone nitrogen of yield tellinin and 15-hydroxytellenin (15-HT), respectively. The UDP-glucosyltransferase GT1 and the methyltransferase MT1, located outside the tenS gene cluster, contribute to the stepwise glycosylation and methylation of 15-HT to obtain the glycoside pyridovericin-N-O-(4-O-methyl-beta-D-glucopyranoside) (PMGP). Additional related compounds such as 1-O-methyl-15-HT, (8Z)-1-O-methyl-15-HT, and O-methyltenellin A are also produced but the enzymes involved in their biosynthesis have still to be determined (PubMed:34903054).</text>
</comment>
<comment type="pathway">
    <text evidence="3 4 5 6">Secondary metabolite biosynthesis.</text>
</comment>
<comment type="subunit">
    <text evidence="1">Monomer.</text>
</comment>
<comment type="induction">
    <text evidence="6">Expression is positively regulated by the cluster-specific transcription factor tenR and is induced during cocultures with the natural competitor fungus Metarhizium robertsii.</text>
</comment>
<comment type="similarity">
    <text evidence="9">Belongs to the zinc-containing alcohol dehydrogenase family.</text>
</comment>
<organism>
    <name type="scientific">Beauveria bassiana</name>
    <name type="common">White muscardine disease fungus</name>
    <name type="synonym">Tritirachium shiotae</name>
    <dbReference type="NCBI Taxonomy" id="176275"/>
    <lineage>
        <taxon>Eukaryota</taxon>
        <taxon>Fungi</taxon>
        <taxon>Dikarya</taxon>
        <taxon>Ascomycota</taxon>
        <taxon>Pezizomycotina</taxon>
        <taxon>Sordariomycetes</taxon>
        <taxon>Hypocreomycetidae</taxon>
        <taxon>Hypocreales</taxon>
        <taxon>Cordycipitaceae</taxon>
        <taxon>Beauveria</taxon>
    </lineage>
</organism>
<gene>
    <name evidence="8" type="primary">tenC</name>
    <name evidence="7" type="synonym">ORF3</name>
</gene>
<feature type="chain" id="PRO_0000438446" description="Trans-enoyl reductase tenC">
    <location>
        <begin position="1"/>
        <end position="388"/>
    </location>
</feature>
<feature type="binding site" evidence="1">
    <location>
        <begin position="51"/>
        <end position="54"/>
    </location>
    <ligand>
        <name>NADP(+)</name>
        <dbReference type="ChEBI" id="CHEBI:58349"/>
    </ligand>
</feature>
<feature type="binding site" evidence="2">
    <location>
        <begin position="142"/>
        <end position="149"/>
    </location>
    <ligand>
        <name>substrate</name>
    </ligand>
</feature>
<feature type="binding site" evidence="1">
    <location>
        <begin position="219"/>
        <end position="222"/>
    </location>
    <ligand>
        <name>NADP(+)</name>
        <dbReference type="ChEBI" id="CHEBI:58349"/>
    </ligand>
</feature>
<feature type="binding site" evidence="1">
    <location>
        <position position="237"/>
    </location>
    <ligand>
        <name>NADP(+)</name>
        <dbReference type="ChEBI" id="CHEBI:58349"/>
    </ligand>
</feature>
<feature type="binding site" evidence="1">
    <location>
        <begin position="284"/>
        <end position="285"/>
    </location>
    <ligand>
        <name>NADP(+)</name>
        <dbReference type="ChEBI" id="CHEBI:58349"/>
    </ligand>
</feature>
<feature type="binding site" evidence="2">
    <location>
        <begin position="304"/>
        <end position="308"/>
    </location>
    <ligand>
        <name>substrate</name>
    </ligand>
</feature>
<feature type="binding site" evidence="1">
    <location>
        <begin position="373"/>
        <end position="374"/>
    </location>
    <ligand>
        <name>NADP(+)</name>
        <dbReference type="ChEBI" id="CHEBI:58349"/>
    </ligand>
</feature>